<reference evidence="15 16" key="1">
    <citation type="journal article" date="1995" name="Development">
        <title>Nodal-related signals induce axial mesoderm and dorsalize mesoderm during gastrulation.</title>
        <authorList>
            <person name="Jones C.M."/>
            <person name="Kuehn M.R."/>
            <person name="Hogan B.L.M."/>
            <person name="Smith J.C."/>
            <person name="Wright C.V.E."/>
        </authorList>
    </citation>
    <scope>NUCLEOTIDE SEQUENCE [MRNA]</scope>
    <scope>FUNCTION</scope>
    <scope>TISSUE SPECIFICITY</scope>
    <scope>DEVELOPMENTAL STAGE</scope>
    <scope>INDUCTION</scope>
    <source>
        <tissue evidence="11">Gastrula</tissue>
    </source>
</reference>
<reference evidence="15" key="2">
    <citation type="journal article" date="1996" name="Curr. Biol.">
        <title>Signalling by TGF-beta family members: short-range effects of Xnr-2 and BMP-4 contrast with the long-range effects of activin.</title>
        <authorList>
            <person name="Jones C.M."/>
            <person name="Armes N."/>
            <person name="Smith J.C."/>
        </authorList>
    </citation>
    <scope>FUNCTION</scope>
</reference>
<reference key="3">
    <citation type="journal article" date="1997" name="Development">
        <title>Direct neural induction and selective inhibition of mesoderm and epidermis inducers by Xnr3.</title>
        <authorList>
            <person name="Hansen C.S."/>
            <person name="Marion C.D."/>
            <person name="Steele K."/>
            <person name="George S."/>
            <person name="Smith W.C."/>
        </authorList>
    </citation>
    <scope>FUNCTION</scope>
    <scope>MUTAGENESIS OF CYS-334</scope>
</reference>
<reference evidence="15" key="4">
    <citation type="journal article" date="1997" name="Development">
        <title>Functional differences among Xenopus nodal-related genes in left-right axis determination.</title>
        <authorList>
            <person name="Sampath K."/>
            <person name="Cheng A.M.S."/>
            <person name="Frisch A."/>
            <person name="Wright C.V.E."/>
        </authorList>
    </citation>
    <scope>FUNCTION</scope>
</reference>
<reference evidence="15" key="5">
    <citation type="journal article" date="1999" name="Development">
        <title>Xenopus nodal-related signaling is essential for mesendodermal patterning during early embryogenesis.</title>
        <authorList>
            <person name="Osada S."/>
            <person name="Wright C.V.E."/>
        </authorList>
    </citation>
    <scope>FUNCTION</scope>
    <scope>MUTAGENESIS OF 278-ARG--ARG-282; CYS-334 AND CYS-368</scope>
</reference>
<reference key="6">
    <citation type="journal article" date="2000" name="J. Biol. Chem.">
        <title>Primary structure requirements for Xenopus nodal-related 3 and a comparison with regions required by Xenopus nodal-related 2.</title>
        <authorList>
            <person name="Ezal C.H."/>
            <person name="Marion C.D."/>
            <person name="Smith W.C."/>
        </authorList>
    </citation>
    <scope>FUNCTION</scope>
    <scope>DOMAIN</scope>
    <scope>MUTAGENESIS OF 346-PHE--PRO-348</scope>
</reference>
<reference key="7">
    <citation type="journal article" date="2002" name="Dev. Biol.">
        <title>Multiple nodal-related genes act coordinately in Xenopus embryogenesis.</title>
        <authorList>
            <person name="Onuma Y."/>
            <person name="Takahashi S."/>
            <person name="Yokota C."/>
            <person name="Asashima M."/>
        </authorList>
    </citation>
    <scope>FUNCTION</scope>
    <scope>INDUCTION</scope>
</reference>
<reference evidence="15" key="8">
    <citation type="journal article" date="2002" name="Development">
        <title>Effects of heterodimerization and proteolytic processing on Derriere and Nodal activity: implications for mesoderm induction in Xenopus.</title>
        <authorList>
            <person name="Eimon P.M."/>
            <person name="Harland R.M."/>
        </authorList>
    </citation>
    <scope>FUNCTION</scope>
    <scope>SUBCELLULAR LOCATION</scope>
    <scope>INTERACTION WITH DERRIERE</scope>
    <scope>MUTAGENESIS OF 209-ARG--ARG-212 AND 278-ARG--ARG-282</scope>
</reference>
<reference evidence="15" key="9">
    <citation type="journal article" date="2002" name="Int. J. Dev. Biol.">
        <title>Multiple interactions between maternally-activated signalling pathways control Xenopus nodal-related genes.</title>
        <authorList>
            <person name="Rex M."/>
            <person name="Hilton E."/>
            <person name="Old R.W."/>
        </authorList>
    </citation>
    <scope>INDUCTION</scope>
</reference>
<reference evidence="15" key="10">
    <citation type="journal article" date="2004" name="Curr. Biol.">
        <title>Visualizing long-range movement of the morphogen Xnr2 in the Xenopus embryo.</title>
        <authorList>
            <person name="Williams P.H."/>
            <person name="Hagemann A."/>
            <person name="Gonzalez-Gaitan M."/>
            <person name="Smith J.C."/>
        </authorList>
    </citation>
    <scope>FUNCTION</scope>
    <scope>SUBCELLULAR LOCATION</scope>
</reference>
<reference evidence="15" key="11">
    <citation type="journal article" date="2005" name="Dev. Dyn.">
        <title>Xnr2 and Xnr5 unprocessed proteins inhibit Wnt signaling upstream of dishevelled.</title>
        <authorList>
            <person name="Onuma Y."/>
            <person name="Takahashi S."/>
            <person name="Haramoto Y."/>
            <person name="Tanegashima K."/>
            <person name="Yokota C."/>
            <person name="Whitman M."/>
            <person name="Asashima M."/>
        </authorList>
    </citation>
    <scope>FUNCTION</scope>
    <scope>DOMAIN</scope>
    <scope>MUTAGENESIS OF 278-ARG--ARG-282</scope>
</reference>
<reference key="12">
    <citation type="journal article" date="2007" name="PLoS ONE">
        <title>Tsukushi modulates Xnr2, FGF and BMP signaling: regulation of Xenopus germ layer formation.</title>
        <authorList>
            <person name="Morris S.A."/>
            <person name="Almeida A.D."/>
            <person name="Tanaka H."/>
            <person name="Ohta K."/>
            <person name="Ohnuma S."/>
        </authorList>
    </citation>
    <scope>INTERACTION WITH TSKU</scope>
</reference>
<comment type="function">
    <text evidence="3 4 5 7 8 9 11 12 13 14">Cooperation and regulatory loops of multiple nodals are essential for mesendoderm patterning in early embryos. Essential for mesoderm formation and axial patterning during embryonic development. Activates the activin-like signaling pathway to induce dorsal and ventral mesoderm in animal cap ectoderm. In addition, also dorsalizes ventral marginal zone (VMZ) tissues during gastrulation. Induces muscle actin. Appears to act as both a short-range and long-range morphogen. The unprocessed protein inhibits bmp- and wnt-signaling.</text>
</comment>
<comment type="subunit">
    <text evidence="1 7 10">Homodimer; disulfide-linked (By similarity). Forms heterodimers with the TGF-beta family member derriere (PubMed:12070085). Interacts with tsku; enhances nodal2 activity (PubMed:17925852).</text>
</comment>
<comment type="subcellular location">
    <subcellularLocation>
        <location evidence="7 8">Secreted</location>
    </subcellularLocation>
</comment>
<comment type="tissue specificity">
    <text evidence="11">First localized to the vegetal region of the blastula. Just prior to gastrulation (stage 10), this expression disappears and instead becomes localized to the dorsal marginal zone, with enrichment in the organizer.</text>
</comment>
<comment type="developmental stage">
    <text evidence="11">First expressed at late blastula (stage 9) with expression peaking at early gastrula. Expression then disappears and does not return.</text>
</comment>
<comment type="induction">
    <text evidence="5 6 11">By dorsal mesoderm-inducing signals including activin and other nodal-related proteins.</text>
</comment>
<comment type="domain">
    <text evidence="4 9">The pro-region is necessary but not sufficient for wnt-inhibitory activity. The central region is required for muscle induction activity.</text>
</comment>
<comment type="similarity">
    <text evidence="2">Belongs to the TGF-beta family.</text>
</comment>
<proteinExistence type="evidence at protein level"/>
<organism>
    <name type="scientific">Xenopus laevis</name>
    <name type="common">African clawed frog</name>
    <dbReference type="NCBI Taxonomy" id="8355"/>
    <lineage>
        <taxon>Eukaryota</taxon>
        <taxon>Metazoa</taxon>
        <taxon>Chordata</taxon>
        <taxon>Craniata</taxon>
        <taxon>Vertebrata</taxon>
        <taxon>Euteleostomi</taxon>
        <taxon>Amphibia</taxon>
        <taxon>Batrachia</taxon>
        <taxon>Anura</taxon>
        <taxon>Pipoidea</taxon>
        <taxon>Pipidae</taxon>
        <taxon>Xenopodinae</taxon>
        <taxon>Xenopus</taxon>
        <taxon>Xenopus</taxon>
    </lineage>
</organism>
<keyword id="KW-0165">Cleavage on pair of basic residues</keyword>
<keyword id="KW-0217">Developmental protein</keyword>
<keyword id="KW-1015">Disulfide bond</keyword>
<keyword id="KW-0325">Glycoprotein</keyword>
<keyword id="KW-0339">Growth factor</keyword>
<keyword id="KW-1185">Reference proteome</keyword>
<keyword id="KW-0964">Secreted</keyword>
<keyword id="KW-0732">Signal</keyword>
<dbReference type="EMBL" id="U29448">
    <property type="protein sequence ID" value="AAA97393.1"/>
    <property type="molecule type" value="mRNA"/>
</dbReference>
<dbReference type="RefSeq" id="NP_001081436.1">
    <property type="nucleotide sequence ID" value="NM_001087967.1"/>
</dbReference>
<dbReference type="GlyCosmos" id="Q91620">
    <property type="glycosylation" value="3 sites, No reported glycans"/>
</dbReference>
<dbReference type="GeneID" id="397835"/>
<dbReference type="KEGG" id="xla:397835"/>
<dbReference type="AGR" id="Xenbase:XB-GENE-865706"/>
<dbReference type="CTD" id="397835"/>
<dbReference type="Xenbase" id="XB-GENE-865706">
    <property type="gene designation" value="nodal2.L"/>
</dbReference>
<dbReference type="OMA" id="DHWDFSF"/>
<dbReference type="OrthoDB" id="5949851at2759"/>
<dbReference type="Proteomes" id="UP000186698">
    <property type="component" value="Chromosome 3L"/>
</dbReference>
<dbReference type="Bgee" id="397835">
    <property type="expression patterns" value="Expressed in gastrula and 1 other cell type or tissue"/>
</dbReference>
<dbReference type="GO" id="GO:0005615">
    <property type="term" value="C:extracellular space"/>
    <property type="evidence" value="ECO:0000314"/>
    <property type="project" value="UniProtKB"/>
</dbReference>
<dbReference type="GO" id="GO:0005125">
    <property type="term" value="F:cytokine activity"/>
    <property type="evidence" value="ECO:0000318"/>
    <property type="project" value="GO_Central"/>
</dbReference>
<dbReference type="GO" id="GO:0008083">
    <property type="term" value="F:growth factor activity"/>
    <property type="evidence" value="ECO:0007669"/>
    <property type="project" value="UniProtKB-KW"/>
</dbReference>
<dbReference type="GO" id="GO:0019838">
    <property type="term" value="F:growth factor binding"/>
    <property type="evidence" value="ECO:0000353"/>
    <property type="project" value="UniProtKB"/>
</dbReference>
<dbReference type="GO" id="GO:0016015">
    <property type="term" value="F:morphogen activity"/>
    <property type="evidence" value="ECO:0000315"/>
    <property type="project" value="UniProtKB"/>
</dbReference>
<dbReference type="GO" id="GO:0048320">
    <property type="term" value="P:axial mesoderm formation"/>
    <property type="evidence" value="ECO:0000315"/>
    <property type="project" value="UniProtKB"/>
</dbReference>
<dbReference type="GO" id="GO:0007368">
    <property type="term" value="P:determination of left/right symmetry"/>
    <property type="evidence" value="ECO:0000315"/>
    <property type="project" value="UniProtKB"/>
</dbReference>
<dbReference type="GO" id="GO:0009950">
    <property type="term" value="P:dorsal/ventral axis specification"/>
    <property type="evidence" value="ECO:0000315"/>
    <property type="project" value="Xenbase"/>
</dbReference>
<dbReference type="GO" id="GO:0001702">
    <property type="term" value="P:gastrulation with mouth forming second"/>
    <property type="evidence" value="ECO:0000315"/>
    <property type="project" value="UniProtKB"/>
</dbReference>
<dbReference type="GO" id="GO:0001707">
    <property type="term" value="P:mesoderm formation"/>
    <property type="evidence" value="ECO:0000315"/>
    <property type="project" value="UniProtKB"/>
</dbReference>
<dbReference type="GO" id="GO:0030111">
    <property type="term" value="P:regulation of Wnt signaling pathway"/>
    <property type="evidence" value="ECO:0000315"/>
    <property type="project" value="UniProtKB"/>
</dbReference>
<dbReference type="CDD" id="cd13759">
    <property type="entry name" value="TGF_beta_NODAL"/>
    <property type="match status" value="1"/>
</dbReference>
<dbReference type="FunFam" id="2.10.90.10:FF:000026">
    <property type="entry name" value="Nodal homolog 3-A"/>
    <property type="match status" value="1"/>
</dbReference>
<dbReference type="Gene3D" id="2.10.90.10">
    <property type="entry name" value="Cystine-knot cytokines"/>
    <property type="match status" value="1"/>
</dbReference>
<dbReference type="InterPro" id="IPR029034">
    <property type="entry name" value="Cystine-knot_cytokine"/>
</dbReference>
<dbReference type="InterPro" id="IPR001839">
    <property type="entry name" value="TGF-b_C"/>
</dbReference>
<dbReference type="InterPro" id="IPR001111">
    <property type="entry name" value="TGF-b_propeptide"/>
</dbReference>
<dbReference type="InterPro" id="IPR015615">
    <property type="entry name" value="TGF-beta-rel"/>
</dbReference>
<dbReference type="InterPro" id="IPR017948">
    <property type="entry name" value="TGFb_CS"/>
</dbReference>
<dbReference type="PANTHER" id="PTHR11848:SF159">
    <property type="entry name" value="NODAL HOMOLOG"/>
    <property type="match status" value="1"/>
</dbReference>
<dbReference type="PANTHER" id="PTHR11848">
    <property type="entry name" value="TGF-BETA FAMILY"/>
    <property type="match status" value="1"/>
</dbReference>
<dbReference type="Pfam" id="PF00019">
    <property type="entry name" value="TGF_beta"/>
    <property type="match status" value="1"/>
</dbReference>
<dbReference type="Pfam" id="PF00688">
    <property type="entry name" value="TGFb_propeptide"/>
    <property type="match status" value="1"/>
</dbReference>
<dbReference type="SMART" id="SM00204">
    <property type="entry name" value="TGFB"/>
    <property type="match status" value="1"/>
</dbReference>
<dbReference type="SUPFAM" id="SSF57501">
    <property type="entry name" value="Cystine-knot cytokines"/>
    <property type="match status" value="1"/>
</dbReference>
<dbReference type="PROSITE" id="PS00250">
    <property type="entry name" value="TGF_BETA_1"/>
    <property type="match status" value="1"/>
</dbReference>
<dbReference type="PROSITE" id="PS51362">
    <property type="entry name" value="TGF_BETA_2"/>
    <property type="match status" value="1"/>
</dbReference>
<name>NOD2A_XENLA</name>
<accession>Q91620</accession>
<sequence length="405" mass="46067">MASLGVILFFVIASLIHGKPIHSERKAAKIPLEGSNLGYKKPNNIYGSRLSQGMRYPPSMMQLYQTLILGNDTDLSILEYPVLQESDAVLSLIAKSCVVVGNRWTLSFDMSSISSSNELKLAELRIRLPSFERSQDVTVEIYHTKEGQENLFMGSFKTNPSVAMGSSWKIFNLTRMLQYYLHQGEPFTNVEYIEVKNMHERAKPHVIKRGVRAEVEEGLQRNKDNTPASSFPTERVVLVVFTRDKPTASHFGSPSLIHTVESSKYVMSENTVRVTDTRRPRRNQKTKNTIVMNTIPSRSVGKTLCRRVDMIVDFEKIEWGDRIVYPKRFNAYRCEGACPIPLNETFKPTNHAYIKSLVKLYDQEKVECSSCVPVKMSPLSMLLYEDGEVVLKHHEDMIVDECGCN</sequence>
<evidence type="ECO:0000250" key="1">
    <source>
        <dbReference type="UniProtKB" id="P43021"/>
    </source>
</evidence>
<evidence type="ECO:0000255" key="2"/>
<evidence type="ECO:0000269" key="3">
    <source>
    </source>
</evidence>
<evidence type="ECO:0000269" key="4">
    <source>
    </source>
</evidence>
<evidence type="ECO:0000269" key="5">
    <source>
    </source>
</evidence>
<evidence type="ECO:0000269" key="6">
    <source>
    </source>
</evidence>
<evidence type="ECO:0000269" key="7">
    <source>
    </source>
</evidence>
<evidence type="ECO:0000269" key="8">
    <source>
    </source>
</evidence>
<evidence type="ECO:0000269" key="9">
    <source>
    </source>
</evidence>
<evidence type="ECO:0000269" key="10">
    <source>
    </source>
</evidence>
<evidence type="ECO:0000269" key="11">
    <source>
    </source>
</evidence>
<evidence type="ECO:0000269" key="12">
    <source>
    </source>
</evidence>
<evidence type="ECO:0000269" key="13">
    <source>
    </source>
</evidence>
<evidence type="ECO:0000269" key="14">
    <source>
    </source>
</evidence>
<evidence type="ECO:0000305" key="15"/>
<evidence type="ECO:0000312" key="16">
    <source>
        <dbReference type="EMBL" id="AAA97393.1"/>
    </source>
</evidence>
<feature type="signal peptide" evidence="2">
    <location>
        <begin position="1"/>
        <end position="18"/>
    </location>
</feature>
<feature type="propeptide" id="PRO_0000274253" evidence="2">
    <location>
        <begin position="19"/>
        <end position="282"/>
    </location>
</feature>
<feature type="chain" id="PRO_0000274254" description="Nodal homolog 2-A" evidence="2">
    <location>
        <begin position="283"/>
        <end position="405"/>
    </location>
</feature>
<feature type="glycosylation site" description="N-linked (GlcNAc...) asparagine" evidence="2">
    <location>
        <position position="71"/>
    </location>
</feature>
<feature type="glycosylation site" description="N-linked (GlcNAc...) asparagine" evidence="2">
    <location>
        <position position="172"/>
    </location>
</feature>
<feature type="glycosylation site" description="N-linked (GlcNAc...) asparagine" evidence="2">
    <location>
        <position position="343"/>
    </location>
</feature>
<feature type="disulfide bond" evidence="1">
    <location>
        <begin position="305"/>
        <end position="371"/>
    </location>
</feature>
<feature type="disulfide bond" evidence="1">
    <location>
        <begin position="334"/>
        <end position="402"/>
    </location>
</feature>
<feature type="disulfide bond" evidence="1">
    <location>
        <begin position="338"/>
        <end position="404"/>
    </location>
</feature>
<feature type="disulfide bond" description="Interchain" evidence="1">
    <location>
        <position position="368"/>
    </location>
</feature>
<feature type="mutagenesis site" description="Cleavage mutant which disrupts nodal signaling in a dominant negative-like manner when overexpressed. Remains secreted, retains some signaling activity and able to induce some mesoderm; when associated with 278-G--G-282." evidence="7">
    <original>RGVR</original>
    <variation>ALDA</variation>
    <location>
        <begin position="209"/>
        <end position="212"/>
    </location>
</feature>
<feature type="mutagenesis site" description="Cleavage mutant which disrupts nodal signaling in a dominant negative-like manner when overexpressed. Remains secreted, retains some signaling activity and able to induce some mesoderm; when associated with 209-A--A-212." evidence="3 7 9">
    <original>RRPRR</original>
    <variation>GVDGG</variation>
    <location>
        <begin position="278"/>
        <end position="282"/>
    </location>
</feature>
<feature type="mutagenesis site" description="Fails to induce mesoderm." evidence="3 13">
    <original>C</original>
    <variation>S</variation>
    <location>
        <position position="334"/>
    </location>
</feature>
<feature type="mutagenesis site" description="Greatly reduces muscle actin inducing activity." evidence="4">
    <original>FKP</original>
    <variation>ENA</variation>
    <location>
        <begin position="346"/>
        <end position="348"/>
    </location>
</feature>
<feature type="mutagenesis site" description="No effect on mesoderm-inducing activities." evidence="3">
    <original>C</original>
    <variation>S</variation>
    <location>
        <position position="368"/>
    </location>
</feature>
<gene>
    <name type="primary">nodal2-a</name>
</gene>
<protein>
    <recommendedName>
        <fullName>Nodal homolog 2-A</fullName>
    </recommendedName>
    <alternativeName>
        <fullName>Nodal-related protein 2-A</fullName>
    </alternativeName>
    <alternativeName>
        <fullName>Xnr-2-A</fullName>
        <shortName>Xnr2-A</shortName>
        <shortName>nr-2</shortName>
    </alternativeName>
</protein>